<name>MEGL_FUSNP</name>
<protein>
    <recommendedName>
        <fullName evidence="6">L-methionine gamma-lyase</fullName>
        <shortName evidence="5">MGL</shortName>
        <ecNumber evidence="3">4.4.1.11</ecNumber>
    </recommendedName>
    <alternativeName>
        <fullName evidence="6">Homocysteine desulfhydrase</fullName>
        <ecNumber evidence="3">4.4.1.2</ecNumber>
    </alternativeName>
    <alternativeName>
        <fullName evidence="4">L-methionine-alpha-deamino-gamma-mercaptomethane-lyase</fullName>
        <shortName evidence="4">METase</shortName>
    </alternativeName>
</protein>
<feature type="chain" id="PRO_0000436013" description="L-methionine gamma-lyase">
    <location>
        <begin position="1"/>
        <end position="395"/>
    </location>
</feature>
<feature type="binding site" evidence="1">
    <location>
        <begin position="56"/>
        <end position="58"/>
    </location>
    <ligand>
        <name>pyridoxal 5'-phosphate</name>
        <dbReference type="ChEBI" id="CHEBI:597326"/>
        <note>ligand shared between dimeric partners</note>
    </ligand>
</feature>
<feature type="binding site" description="in other chain" evidence="1">
    <location>
        <begin position="86"/>
        <end position="87"/>
    </location>
    <ligand>
        <name>pyridoxal 5'-phosphate</name>
        <dbReference type="ChEBI" id="CHEBI:597326"/>
        <note>ligand shared between dimeric partners</note>
    </ligand>
</feature>
<feature type="binding site" evidence="1">
    <location>
        <position position="111"/>
    </location>
    <ligand>
        <name>substrate</name>
    </ligand>
</feature>
<feature type="binding site" description="in other chain" evidence="1">
    <location>
        <begin position="206"/>
        <end position="208"/>
    </location>
    <ligand>
        <name>pyridoxal 5'-phosphate</name>
        <dbReference type="ChEBI" id="CHEBI:597326"/>
        <note>ligand shared between dimeric partners</note>
    </ligand>
</feature>
<feature type="binding site" evidence="1">
    <location>
        <position position="373"/>
    </location>
    <ligand>
        <name>substrate</name>
    </ligand>
</feature>
<feature type="modified residue" description="N6-(pyridoxal phosphate)lysine" evidence="1">
    <location>
        <position position="209"/>
    </location>
</feature>
<evidence type="ECO:0000250" key="1">
    <source>
        <dbReference type="UniProtKB" id="P13254"/>
    </source>
</evidence>
<evidence type="ECO:0000250" key="2">
    <source>
        <dbReference type="UniProtKB" id="Q8RDT4"/>
    </source>
</evidence>
<evidence type="ECO:0000269" key="3">
    <source>
    </source>
</evidence>
<evidence type="ECO:0000303" key="4">
    <source>
    </source>
</evidence>
<evidence type="ECO:0000305" key="5"/>
<evidence type="ECO:0000305" key="6">
    <source>
    </source>
</evidence>
<accession>Q8L0X4</accession>
<organism>
    <name type="scientific">Fusobacterium nucleatum subsp. polymorphum</name>
    <name type="common">Fusobacterium polymorphum</name>
    <dbReference type="NCBI Taxonomy" id="76857"/>
    <lineage>
        <taxon>Bacteria</taxon>
        <taxon>Fusobacteriati</taxon>
        <taxon>Fusobacteriota</taxon>
        <taxon>Fusobacteriia</taxon>
        <taxon>Fusobacteriales</taxon>
        <taxon>Fusobacteriaceae</taxon>
        <taxon>Fusobacterium</taxon>
    </lineage>
</organism>
<keyword id="KW-0046">Antibiotic resistance</keyword>
<keyword id="KW-0903">Direct protein sequencing</keyword>
<keyword id="KW-0456">Lyase</keyword>
<keyword id="KW-0663">Pyridoxal phosphate</keyword>
<reference key="1">
    <citation type="journal article" date="2002" name="FEBS Lett.">
        <title>3-Chloro-DL-alanine resistance by L-methionine-alpha-deamino-gamma-mercaptomethane-lyase activity.</title>
        <authorList>
            <person name="Yoshimura M."/>
            <person name="Nakano Y."/>
            <person name="Fukamachi H."/>
            <person name="Koga T."/>
        </authorList>
    </citation>
    <scope>NUCLEOTIDE SEQUENCE [GENOMIC DNA]</scope>
    <scope>PROTEIN SEQUENCE OF 1-20</scope>
    <scope>FUNCTION</scope>
    <scope>CATALYTIC ACTIVITY</scope>
    <scope>SUBSTRATE SPECIFICITY</scope>
    <scope>ANTIBIOTIC RESISTANCE</scope>
    <source>
        <strain>ATCC 10953 / DSM 20482 / CCUG 9126 / JCM 12990 / NCTC 10562 / 555A</strain>
    </source>
</reference>
<comment type="function">
    <text evidence="3">Catalyzes the alpha,gamma-elimination of L-methionine to produce methanethiol, 2-oxobutanoate and ammonia; methanethiol (methyl mercaptan) is considered to be one of the main causes of the oral malodor associated with periodontitis. Also displays homocysteine desulfhydrase activity, degrading homocysteine to produce hydrogen sulfide, 2-oxobutanoate and ammonia. L-cysteine and S-methyl-L-cysteine are poor substrates for the enzyme.</text>
</comment>
<comment type="function">
    <text evidence="3">Plays an important role in the resistance of F.nucleatum to the antibacterial agent 3-chloro-DL-alanine (3CA), thanks to its 3CA chloride-lyase (deaminating) activity.</text>
</comment>
<comment type="catalytic activity">
    <reaction evidence="3">
        <text>L-methionine + H2O = methanethiol + 2-oxobutanoate + NH4(+)</text>
        <dbReference type="Rhea" id="RHEA:23800"/>
        <dbReference type="ChEBI" id="CHEBI:15377"/>
        <dbReference type="ChEBI" id="CHEBI:16007"/>
        <dbReference type="ChEBI" id="CHEBI:16763"/>
        <dbReference type="ChEBI" id="CHEBI:28938"/>
        <dbReference type="ChEBI" id="CHEBI:57844"/>
        <dbReference type="EC" id="4.4.1.11"/>
    </reaction>
</comment>
<comment type="catalytic activity">
    <reaction evidence="3">
        <text>L-homocysteine + H2O = 2-oxobutanoate + hydrogen sulfide + NH4(+) + H(+)</text>
        <dbReference type="Rhea" id="RHEA:14501"/>
        <dbReference type="ChEBI" id="CHEBI:15377"/>
        <dbReference type="ChEBI" id="CHEBI:15378"/>
        <dbReference type="ChEBI" id="CHEBI:16763"/>
        <dbReference type="ChEBI" id="CHEBI:28938"/>
        <dbReference type="ChEBI" id="CHEBI:29919"/>
        <dbReference type="ChEBI" id="CHEBI:58199"/>
        <dbReference type="EC" id="4.4.1.2"/>
    </reaction>
</comment>
<comment type="cofactor">
    <cofactor evidence="1 5">
        <name>pyridoxal 5'-phosphate</name>
        <dbReference type="ChEBI" id="CHEBI:597326"/>
    </cofactor>
</comment>
<comment type="subunit">
    <text evidence="2">Homotetramer.</text>
</comment>
<comment type="miscellaneous">
    <text evidence="3">F.nucleatum strain ATCC 10953 is able to grow in medium containing 1 mM 3CA.</text>
</comment>
<comment type="similarity">
    <text evidence="5">Belongs to the trans-sulfuration enzymes family. L-methionine gamma-lyase subfamily.</text>
</comment>
<dbReference type="EC" id="4.4.1.11" evidence="3"/>
<dbReference type="EC" id="4.4.1.2" evidence="3"/>
<dbReference type="EMBL" id="AB077041">
    <property type="protein sequence ID" value="BAC02724.1"/>
    <property type="molecule type" value="Genomic_DNA"/>
</dbReference>
<dbReference type="SMR" id="Q8L0X4"/>
<dbReference type="STRING" id="76857.RO02_12380"/>
<dbReference type="KEGG" id="fpol:ERS445057_02025"/>
<dbReference type="PATRIC" id="fig|76857.9.peg.1983"/>
<dbReference type="GO" id="GO:0005737">
    <property type="term" value="C:cytoplasm"/>
    <property type="evidence" value="ECO:0007669"/>
    <property type="project" value="TreeGrafter"/>
</dbReference>
<dbReference type="GO" id="GO:0047982">
    <property type="term" value="F:homocysteine desulfhydrase activity"/>
    <property type="evidence" value="ECO:0007669"/>
    <property type="project" value="UniProtKB-EC"/>
</dbReference>
<dbReference type="GO" id="GO:0018826">
    <property type="term" value="F:methionine gamma-lyase activity"/>
    <property type="evidence" value="ECO:0007669"/>
    <property type="project" value="UniProtKB-EC"/>
</dbReference>
<dbReference type="GO" id="GO:0030170">
    <property type="term" value="F:pyridoxal phosphate binding"/>
    <property type="evidence" value="ECO:0007669"/>
    <property type="project" value="InterPro"/>
</dbReference>
<dbReference type="GO" id="GO:0046677">
    <property type="term" value="P:response to antibiotic"/>
    <property type="evidence" value="ECO:0007669"/>
    <property type="project" value="UniProtKB-KW"/>
</dbReference>
<dbReference type="GO" id="GO:0019346">
    <property type="term" value="P:transsulfuration"/>
    <property type="evidence" value="ECO:0007669"/>
    <property type="project" value="InterPro"/>
</dbReference>
<dbReference type="CDD" id="cd00614">
    <property type="entry name" value="CGS_like"/>
    <property type="match status" value="1"/>
</dbReference>
<dbReference type="FunFam" id="3.40.640.10:FF:000046">
    <property type="entry name" value="Cystathionine gamma-lyase"/>
    <property type="match status" value="1"/>
</dbReference>
<dbReference type="FunFam" id="3.90.1150.10:FF:000008">
    <property type="entry name" value="Cystathionine gamma-synthase"/>
    <property type="match status" value="1"/>
</dbReference>
<dbReference type="Gene3D" id="3.90.1150.10">
    <property type="entry name" value="Aspartate Aminotransferase, domain 1"/>
    <property type="match status" value="1"/>
</dbReference>
<dbReference type="Gene3D" id="3.40.640.10">
    <property type="entry name" value="Type I PLP-dependent aspartate aminotransferase-like (Major domain)"/>
    <property type="match status" value="1"/>
</dbReference>
<dbReference type="InterPro" id="IPR000277">
    <property type="entry name" value="Cys/Met-Metab_PyrdxlP-dep_enz"/>
</dbReference>
<dbReference type="InterPro" id="IPR006237">
    <property type="entry name" value="L-Met_gamma_lys"/>
</dbReference>
<dbReference type="InterPro" id="IPR015424">
    <property type="entry name" value="PyrdxlP-dep_Trfase"/>
</dbReference>
<dbReference type="InterPro" id="IPR015421">
    <property type="entry name" value="PyrdxlP-dep_Trfase_major"/>
</dbReference>
<dbReference type="InterPro" id="IPR015422">
    <property type="entry name" value="PyrdxlP-dep_Trfase_small"/>
</dbReference>
<dbReference type="NCBIfam" id="TIGR01328">
    <property type="entry name" value="met_gam_lyase"/>
    <property type="match status" value="1"/>
</dbReference>
<dbReference type="NCBIfam" id="NF004876">
    <property type="entry name" value="PRK06234.1"/>
    <property type="match status" value="1"/>
</dbReference>
<dbReference type="PANTHER" id="PTHR11808:SF80">
    <property type="entry name" value="CYSTATHIONINE GAMMA-LYASE"/>
    <property type="match status" value="1"/>
</dbReference>
<dbReference type="PANTHER" id="PTHR11808">
    <property type="entry name" value="TRANS-SULFURATION ENZYME FAMILY MEMBER"/>
    <property type="match status" value="1"/>
</dbReference>
<dbReference type="Pfam" id="PF01053">
    <property type="entry name" value="Cys_Met_Meta_PP"/>
    <property type="match status" value="1"/>
</dbReference>
<dbReference type="PIRSF" id="PIRSF001434">
    <property type="entry name" value="CGS"/>
    <property type="match status" value="1"/>
</dbReference>
<dbReference type="SUPFAM" id="SSF53383">
    <property type="entry name" value="PLP-dependent transferases"/>
    <property type="match status" value="1"/>
</dbReference>
<gene>
    <name evidence="4" type="primary">mgl</name>
</gene>
<sequence length="395" mass="43288">METKKYGLGTTAIHAGTLKNLYGTLAMPIYQTSTFIFDSAEQGGRRFALEEAGYIYTRLGNPTTTVLENKIAALEEGEAAVATSSGMGAISSTLWTVLKAGDHVVTDKTLYGCTFALMCHGLTRFGIEVTFVDTSNLDEVKNAMKKNTRVVYLETPANPNLKIVDLEALSKLAHTNPNTLVIVDNTFATPYMQKPLKLGADIVVHSVTKYINGHGDVIAGLVITNKELADQIRFIGLKDMTGAVLGPQDAYYIIRGMKTFEIRMERHCKNAKKVVEFLNKHPKIERVYYPGLETHPGHEIAKKQMKDFGAMISFELKGGFEAGKTLLNNLKLCSLAVSLGDTETLIQHPASMTHSPYTKEEREAAGITDGLVRLSVGLENVEDIIADLEQGLEKI</sequence>
<proteinExistence type="evidence at protein level"/>